<gene>
    <name evidence="1" type="primary">xpt</name>
    <name type="ordered locus">SAUSA300_0386</name>
</gene>
<protein>
    <recommendedName>
        <fullName evidence="1">Xanthine phosphoribosyltransferase</fullName>
        <shortName evidence="1">XPRTase</shortName>
        <ecNumber evidence="1">2.4.2.22</ecNumber>
    </recommendedName>
</protein>
<evidence type="ECO:0000255" key="1">
    <source>
        <dbReference type="HAMAP-Rule" id="MF_01184"/>
    </source>
</evidence>
<accession>Q2FJM8</accession>
<name>XPT_STAA3</name>
<keyword id="KW-0963">Cytoplasm</keyword>
<keyword id="KW-0328">Glycosyltransferase</keyword>
<keyword id="KW-0660">Purine salvage</keyword>
<keyword id="KW-0808">Transferase</keyword>
<feature type="chain" id="PRO_0000339754" description="Xanthine phosphoribosyltransferase">
    <location>
        <begin position="1"/>
        <end position="192"/>
    </location>
</feature>
<feature type="binding site" evidence="1">
    <location>
        <position position="20"/>
    </location>
    <ligand>
        <name>xanthine</name>
        <dbReference type="ChEBI" id="CHEBI:17712"/>
    </ligand>
</feature>
<feature type="binding site" evidence="1">
    <location>
        <position position="27"/>
    </location>
    <ligand>
        <name>xanthine</name>
        <dbReference type="ChEBI" id="CHEBI:17712"/>
    </ligand>
</feature>
<feature type="binding site" evidence="1">
    <location>
        <begin position="128"/>
        <end position="132"/>
    </location>
    <ligand>
        <name>5-phospho-alpha-D-ribose 1-diphosphate</name>
        <dbReference type="ChEBI" id="CHEBI:58017"/>
    </ligand>
</feature>
<feature type="binding site" evidence="1">
    <location>
        <position position="156"/>
    </location>
    <ligand>
        <name>xanthine</name>
        <dbReference type="ChEBI" id="CHEBI:17712"/>
    </ligand>
</feature>
<comment type="function">
    <text evidence="1">Converts the preformed base xanthine, a product of nucleic acid breakdown, to xanthosine 5'-monophosphate (XMP), so it can be reused for RNA or DNA synthesis.</text>
</comment>
<comment type="catalytic activity">
    <reaction evidence="1">
        <text>XMP + diphosphate = xanthine + 5-phospho-alpha-D-ribose 1-diphosphate</text>
        <dbReference type="Rhea" id="RHEA:10800"/>
        <dbReference type="ChEBI" id="CHEBI:17712"/>
        <dbReference type="ChEBI" id="CHEBI:33019"/>
        <dbReference type="ChEBI" id="CHEBI:57464"/>
        <dbReference type="ChEBI" id="CHEBI:58017"/>
        <dbReference type="EC" id="2.4.2.22"/>
    </reaction>
</comment>
<comment type="pathway">
    <text evidence="1">Purine metabolism; XMP biosynthesis via salvage pathway; XMP from xanthine: step 1/1.</text>
</comment>
<comment type="subunit">
    <text evidence="1">Homodimer.</text>
</comment>
<comment type="subcellular location">
    <subcellularLocation>
        <location evidence="1">Cytoplasm</location>
    </subcellularLocation>
</comment>
<comment type="similarity">
    <text evidence="1">Belongs to the purine/pyrimidine phosphoribosyltransferase family. Xpt subfamily.</text>
</comment>
<organism>
    <name type="scientific">Staphylococcus aureus (strain USA300)</name>
    <dbReference type="NCBI Taxonomy" id="367830"/>
    <lineage>
        <taxon>Bacteria</taxon>
        <taxon>Bacillati</taxon>
        <taxon>Bacillota</taxon>
        <taxon>Bacilli</taxon>
        <taxon>Bacillales</taxon>
        <taxon>Staphylococcaceae</taxon>
        <taxon>Staphylococcus</taxon>
    </lineage>
</organism>
<dbReference type="EC" id="2.4.2.22" evidence="1"/>
<dbReference type="EMBL" id="CP000255">
    <property type="protein sequence ID" value="ABD22657.1"/>
    <property type="molecule type" value="Genomic_DNA"/>
</dbReference>
<dbReference type="RefSeq" id="WP_000421410.1">
    <property type="nucleotide sequence ID" value="NZ_CP027476.1"/>
</dbReference>
<dbReference type="SMR" id="Q2FJM8"/>
<dbReference type="GeneID" id="66838694"/>
<dbReference type="KEGG" id="saa:SAUSA300_0386"/>
<dbReference type="HOGENOM" id="CLU_099015_0_0_9"/>
<dbReference type="OMA" id="DNFLNHQ"/>
<dbReference type="UniPathway" id="UPA00602">
    <property type="reaction ID" value="UER00658"/>
</dbReference>
<dbReference type="Proteomes" id="UP000001939">
    <property type="component" value="Chromosome"/>
</dbReference>
<dbReference type="GO" id="GO:0005737">
    <property type="term" value="C:cytoplasm"/>
    <property type="evidence" value="ECO:0007669"/>
    <property type="project" value="UniProtKB-SubCell"/>
</dbReference>
<dbReference type="GO" id="GO:0000310">
    <property type="term" value="F:xanthine phosphoribosyltransferase activity"/>
    <property type="evidence" value="ECO:0007669"/>
    <property type="project" value="UniProtKB-UniRule"/>
</dbReference>
<dbReference type="GO" id="GO:0006166">
    <property type="term" value="P:purine ribonucleoside salvage"/>
    <property type="evidence" value="ECO:0007669"/>
    <property type="project" value="UniProtKB-KW"/>
</dbReference>
<dbReference type="GO" id="GO:0046110">
    <property type="term" value="P:xanthine metabolic process"/>
    <property type="evidence" value="ECO:0007669"/>
    <property type="project" value="InterPro"/>
</dbReference>
<dbReference type="GO" id="GO:0032265">
    <property type="term" value="P:XMP salvage"/>
    <property type="evidence" value="ECO:0007669"/>
    <property type="project" value="UniProtKB-UniRule"/>
</dbReference>
<dbReference type="CDD" id="cd06223">
    <property type="entry name" value="PRTases_typeI"/>
    <property type="match status" value="1"/>
</dbReference>
<dbReference type="Gene3D" id="3.40.50.2020">
    <property type="match status" value="1"/>
</dbReference>
<dbReference type="HAMAP" id="MF_01184">
    <property type="entry name" value="XPRTase"/>
    <property type="match status" value="1"/>
</dbReference>
<dbReference type="InterPro" id="IPR000836">
    <property type="entry name" value="PRibTrfase_dom"/>
</dbReference>
<dbReference type="InterPro" id="IPR029057">
    <property type="entry name" value="PRTase-like"/>
</dbReference>
<dbReference type="InterPro" id="IPR050118">
    <property type="entry name" value="Pur/Pyrimidine_PRTase"/>
</dbReference>
<dbReference type="InterPro" id="IPR010079">
    <property type="entry name" value="Xanthine_PRibTrfase"/>
</dbReference>
<dbReference type="NCBIfam" id="NF006671">
    <property type="entry name" value="PRK09219.1"/>
    <property type="match status" value="1"/>
</dbReference>
<dbReference type="NCBIfam" id="TIGR01744">
    <property type="entry name" value="XPRTase"/>
    <property type="match status" value="1"/>
</dbReference>
<dbReference type="PANTHER" id="PTHR43864">
    <property type="entry name" value="HYPOXANTHINE/GUANINE PHOSPHORIBOSYLTRANSFERASE"/>
    <property type="match status" value="1"/>
</dbReference>
<dbReference type="PANTHER" id="PTHR43864:SF1">
    <property type="entry name" value="XANTHINE PHOSPHORIBOSYLTRANSFERASE"/>
    <property type="match status" value="1"/>
</dbReference>
<dbReference type="SUPFAM" id="SSF53271">
    <property type="entry name" value="PRTase-like"/>
    <property type="match status" value="1"/>
</dbReference>
<reference key="1">
    <citation type="journal article" date="2006" name="Lancet">
        <title>Complete genome sequence of USA300, an epidemic clone of community-acquired meticillin-resistant Staphylococcus aureus.</title>
        <authorList>
            <person name="Diep B.A."/>
            <person name="Gill S.R."/>
            <person name="Chang R.F."/>
            <person name="Phan T.H."/>
            <person name="Chen J.H."/>
            <person name="Davidson M.G."/>
            <person name="Lin F."/>
            <person name="Lin J."/>
            <person name="Carleton H.A."/>
            <person name="Mongodin E.F."/>
            <person name="Sensabaugh G.F."/>
            <person name="Perdreau-Remington F."/>
        </authorList>
    </citation>
    <scope>NUCLEOTIDE SEQUENCE [LARGE SCALE GENOMIC DNA]</scope>
    <source>
        <strain>USA300</strain>
    </source>
</reference>
<proteinExistence type="inferred from homology"/>
<sequence>MELLGQKVKEDGVVIDEKILKVDGFLNHQIDAKLMNEVGRTFYEQFKDKGITKILTIEASGIAPAIMAALHFDVPCLFAKKAKPSTLTDGYYETSIHSFTKNKTSTVIVSKEFLSEEDTVLIIDDFLANGDASLGLYDIAQQANAKTAGIGIVVEKSFQNGHQRLEEAGLTVSSLCKVASLEGNKVTLVGEE</sequence>